<name>SYY_STRP1</name>
<accession>Q9A1U3</accession>
<accession>Q491L8</accession>
<gene>
    <name evidence="1" type="primary">tyrS</name>
    <name type="ordered locus">SPy_0096</name>
    <name type="ordered locus">M5005_Spy0081</name>
</gene>
<organism>
    <name type="scientific">Streptococcus pyogenes serotype M1</name>
    <dbReference type="NCBI Taxonomy" id="301447"/>
    <lineage>
        <taxon>Bacteria</taxon>
        <taxon>Bacillati</taxon>
        <taxon>Bacillota</taxon>
        <taxon>Bacilli</taxon>
        <taxon>Lactobacillales</taxon>
        <taxon>Streptococcaceae</taxon>
        <taxon>Streptococcus</taxon>
    </lineage>
</organism>
<dbReference type="EC" id="6.1.1.1" evidence="1"/>
<dbReference type="EMBL" id="AE004092">
    <property type="protein sequence ID" value="AAK33214.1"/>
    <property type="molecule type" value="Genomic_DNA"/>
</dbReference>
<dbReference type="EMBL" id="CP000017">
    <property type="protein sequence ID" value="AAZ50700.1"/>
    <property type="molecule type" value="Genomic_DNA"/>
</dbReference>
<dbReference type="RefSeq" id="NP_268493.1">
    <property type="nucleotide sequence ID" value="NC_002737.2"/>
</dbReference>
<dbReference type="SMR" id="Q9A1U3"/>
<dbReference type="PaxDb" id="1314-HKU360_00127"/>
<dbReference type="KEGG" id="spy:SPy_0096"/>
<dbReference type="KEGG" id="spz:M5005_Spy0081"/>
<dbReference type="PATRIC" id="fig|160490.10.peg.81"/>
<dbReference type="HOGENOM" id="CLU_024003_0_3_9"/>
<dbReference type="OMA" id="YMMAKDS"/>
<dbReference type="Proteomes" id="UP000000750">
    <property type="component" value="Chromosome"/>
</dbReference>
<dbReference type="GO" id="GO:0005829">
    <property type="term" value="C:cytosol"/>
    <property type="evidence" value="ECO:0007669"/>
    <property type="project" value="TreeGrafter"/>
</dbReference>
<dbReference type="GO" id="GO:0005524">
    <property type="term" value="F:ATP binding"/>
    <property type="evidence" value="ECO:0007669"/>
    <property type="project" value="UniProtKB-UniRule"/>
</dbReference>
<dbReference type="GO" id="GO:0003723">
    <property type="term" value="F:RNA binding"/>
    <property type="evidence" value="ECO:0007669"/>
    <property type="project" value="UniProtKB-KW"/>
</dbReference>
<dbReference type="GO" id="GO:0004831">
    <property type="term" value="F:tyrosine-tRNA ligase activity"/>
    <property type="evidence" value="ECO:0007669"/>
    <property type="project" value="UniProtKB-UniRule"/>
</dbReference>
<dbReference type="GO" id="GO:0006437">
    <property type="term" value="P:tyrosyl-tRNA aminoacylation"/>
    <property type="evidence" value="ECO:0007669"/>
    <property type="project" value="UniProtKB-UniRule"/>
</dbReference>
<dbReference type="CDD" id="cd00165">
    <property type="entry name" value="S4"/>
    <property type="match status" value="1"/>
</dbReference>
<dbReference type="CDD" id="cd00805">
    <property type="entry name" value="TyrRS_core"/>
    <property type="match status" value="1"/>
</dbReference>
<dbReference type="FunFam" id="1.10.240.10:FF:000001">
    <property type="entry name" value="Tyrosine--tRNA ligase"/>
    <property type="match status" value="1"/>
</dbReference>
<dbReference type="FunFam" id="3.40.50.620:FF:000008">
    <property type="entry name" value="Tyrosine--tRNA ligase"/>
    <property type="match status" value="1"/>
</dbReference>
<dbReference type="Gene3D" id="3.40.50.620">
    <property type="entry name" value="HUPs"/>
    <property type="match status" value="1"/>
</dbReference>
<dbReference type="Gene3D" id="3.10.290.10">
    <property type="entry name" value="RNA-binding S4 domain"/>
    <property type="match status" value="1"/>
</dbReference>
<dbReference type="Gene3D" id="1.10.240.10">
    <property type="entry name" value="Tyrosyl-Transfer RNA Synthetase"/>
    <property type="match status" value="1"/>
</dbReference>
<dbReference type="HAMAP" id="MF_02006">
    <property type="entry name" value="Tyr_tRNA_synth_type1"/>
    <property type="match status" value="1"/>
</dbReference>
<dbReference type="InterPro" id="IPR001412">
    <property type="entry name" value="aa-tRNA-synth_I_CS"/>
</dbReference>
<dbReference type="InterPro" id="IPR002305">
    <property type="entry name" value="aa-tRNA-synth_Ic"/>
</dbReference>
<dbReference type="InterPro" id="IPR014729">
    <property type="entry name" value="Rossmann-like_a/b/a_fold"/>
</dbReference>
<dbReference type="InterPro" id="IPR002942">
    <property type="entry name" value="S4_RNA-bd"/>
</dbReference>
<dbReference type="InterPro" id="IPR036986">
    <property type="entry name" value="S4_RNA-bd_sf"/>
</dbReference>
<dbReference type="InterPro" id="IPR054608">
    <property type="entry name" value="SYY-like_C"/>
</dbReference>
<dbReference type="InterPro" id="IPR002307">
    <property type="entry name" value="Tyr-tRNA-ligase"/>
</dbReference>
<dbReference type="InterPro" id="IPR024088">
    <property type="entry name" value="Tyr-tRNA-ligase_bac-type"/>
</dbReference>
<dbReference type="InterPro" id="IPR024107">
    <property type="entry name" value="Tyr-tRNA-ligase_bac_1"/>
</dbReference>
<dbReference type="NCBIfam" id="TIGR00234">
    <property type="entry name" value="tyrS"/>
    <property type="match status" value="1"/>
</dbReference>
<dbReference type="PANTHER" id="PTHR11766:SF0">
    <property type="entry name" value="TYROSINE--TRNA LIGASE, MITOCHONDRIAL"/>
    <property type="match status" value="1"/>
</dbReference>
<dbReference type="PANTHER" id="PTHR11766">
    <property type="entry name" value="TYROSYL-TRNA SYNTHETASE"/>
    <property type="match status" value="1"/>
</dbReference>
<dbReference type="Pfam" id="PF22421">
    <property type="entry name" value="SYY_C-terminal"/>
    <property type="match status" value="1"/>
</dbReference>
<dbReference type="Pfam" id="PF00579">
    <property type="entry name" value="tRNA-synt_1b"/>
    <property type="match status" value="1"/>
</dbReference>
<dbReference type="PRINTS" id="PR01040">
    <property type="entry name" value="TRNASYNTHTYR"/>
</dbReference>
<dbReference type="SMART" id="SM00363">
    <property type="entry name" value="S4"/>
    <property type="match status" value="1"/>
</dbReference>
<dbReference type="SUPFAM" id="SSF55174">
    <property type="entry name" value="Alpha-L RNA-binding motif"/>
    <property type="match status" value="1"/>
</dbReference>
<dbReference type="SUPFAM" id="SSF52374">
    <property type="entry name" value="Nucleotidylyl transferase"/>
    <property type="match status" value="1"/>
</dbReference>
<dbReference type="PROSITE" id="PS00178">
    <property type="entry name" value="AA_TRNA_LIGASE_I"/>
    <property type="match status" value="1"/>
</dbReference>
<dbReference type="PROSITE" id="PS50889">
    <property type="entry name" value="S4"/>
    <property type="match status" value="1"/>
</dbReference>
<reference key="1">
    <citation type="journal article" date="2001" name="Proc. Natl. Acad. Sci. U.S.A.">
        <title>Complete genome sequence of an M1 strain of Streptococcus pyogenes.</title>
        <authorList>
            <person name="Ferretti J.J."/>
            <person name="McShan W.M."/>
            <person name="Ajdic D.J."/>
            <person name="Savic D.J."/>
            <person name="Savic G."/>
            <person name="Lyon K."/>
            <person name="Primeaux C."/>
            <person name="Sezate S."/>
            <person name="Suvorov A.N."/>
            <person name="Kenton S."/>
            <person name="Lai H.S."/>
            <person name="Lin S.P."/>
            <person name="Qian Y."/>
            <person name="Jia H.G."/>
            <person name="Najar F.Z."/>
            <person name="Ren Q."/>
            <person name="Zhu H."/>
            <person name="Song L."/>
            <person name="White J."/>
            <person name="Yuan X."/>
            <person name="Clifton S.W."/>
            <person name="Roe B.A."/>
            <person name="McLaughlin R.E."/>
        </authorList>
    </citation>
    <scope>NUCLEOTIDE SEQUENCE [LARGE SCALE GENOMIC DNA]</scope>
    <source>
        <strain>ATCC 700294 / SF370 / Serotype M1</strain>
    </source>
</reference>
<reference key="2">
    <citation type="journal article" date="2005" name="J. Infect. Dis.">
        <title>Evolutionary origin and emergence of a highly successful clone of serotype M1 group A Streptococcus involved multiple horizontal gene transfer events.</title>
        <authorList>
            <person name="Sumby P."/>
            <person name="Porcella S.F."/>
            <person name="Madrigal A.G."/>
            <person name="Barbian K.D."/>
            <person name="Virtaneva K."/>
            <person name="Ricklefs S.M."/>
            <person name="Sturdevant D.E."/>
            <person name="Graham M.R."/>
            <person name="Vuopio-Varkila J."/>
            <person name="Hoe N.P."/>
            <person name="Musser J.M."/>
        </authorList>
    </citation>
    <scope>NUCLEOTIDE SEQUENCE [LARGE SCALE GENOMIC DNA]</scope>
    <source>
        <strain>ATCC BAA-947 / MGAS5005 / Serotype M1</strain>
    </source>
</reference>
<sequence>MNIFEELKARGLVFQTTDEQALVKALTEGQVSYYTGYDPTADSLHLGHLVAILTSRRLQLAGHKPYALVGGATGLIGDPSFKDAERSLQTKETVLEWSDKIKGQLSTFLDFENGDNKAELVNNYDWFSQISFIDFLRDVGKYFTVNYMMSKDSVKKRIETGISYTEFAYQIMQGYDFYELNDKHNVTLQIGGSDQWGNMTAGTELLRKKADKTGHVMTVPLITDSTGKKFGKSEGNAVWLDADKTSPYEMYQFWLNVMDDDAVRFLKIFTFLSLDEIAEIETQFNAARHERLAQKTLAREVVTLVHGEEAYKQALNITEQLFAGNIKNLSANELKQGLSNVPNYHVQSIDNHNIVEILVAAKISPSKRQAREDVQNGAIYINGDRVQDLDYQLSNDDKIDDQLTVIRRGKKKYAVLTY</sequence>
<comment type="function">
    <text evidence="1">Catalyzes the attachment of tyrosine to tRNA(Tyr) in a two-step reaction: tyrosine is first activated by ATP to form Tyr-AMP and then transferred to the acceptor end of tRNA(Tyr).</text>
</comment>
<comment type="catalytic activity">
    <reaction evidence="1">
        <text>tRNA(Tyr) + L-tyrosine + ATP = L-tyrosyl-tRNA(Tyr) + AMP + diphosphate + H(+)</text>
        <dbReference type="Rhea" id="RHEA:10220"/>
        <dbReference type="Rhea" id="RHEA-COMP:9706"/>
        <dbReference type="Rhea" id="RHEA-COMP:9707"/>
        <dbReference type="ChEBI" id="CHEBI:15378"/>
        <dbReference type="ChEBI" id="CHEBI:30616"/>
        <dbReference type="ChEBI" id="CHEBI:33019"/>
        <dbReference type="ChEBI" id="CHEBI:58315"/>
        <dbReference type="ChEBI" id="CHEBI:78442"/>
        <dbReference type="ChEBI" id="CHEBI:78536"/>
        <dbReference type="ChEBI" id="CHEBI:456215"/>
        <dbReference type="EC" id="6.1.1.1"/>
    </reaction>
</comment>
<comment type="subunit">
    <text evidence="1">Homodimer.</text>
</comment>
<comment type="subcellular location">
    <subcellularLocation>
        <location evidence="1">Cytoplasm</location>
    </subcellularLocation>
</comment>
<comment type="similarity">
    <text evidence="1">Belongs to the class-I aminoacyl-tRNA synthetase family. TyrS type 1 subfamily.</text>
</comment>
<keyword id="KW-0030">Aminoacyl-tRNA synthetase</keyword>
<keyword id="KW-0067">ATP-binding</keyword>
<keyword id="KW-0963">Cytoplasm</keyword>
<keyword id="KW-0436">Ligase</keyword>
<keyword id="KW-0547">Nucleotide-binding</keyword>
<keyword id="KW-0648">Protein biosynthesis</keyword>
<keyword id="KW-1185">Reference proteome</keyword>
<keyword id="KW-0694">RNA-binding</keyword>
<proteinExistence type="inferred from homology"/>
<protein>
    <recommendedName>
        <fullName evidence="1">Tyrosine--tRNA ligase</fullName>
        <ecNumber evidence="1">6.1.1.1</ecNumber>
    </recommendedName>
    <alternativeName>
        <fullName evidence="1">Tyrosyl-tRNA synthetase</fullName>
        <shortName evidence="1">TyrRS</shortName>
    </alternativeName>
</protein>
<evidence type="ECO:0000255" key="1">
    <source>
        <dbReference type="HAMAP-Rule" id="MF_02006"/>
    </source>
</evidence>
<feature type="chain" id="PRO_0000234790" description="Tyrosine--tRNA ligase">
    <location>
        <begin position="1"/>
        <end position="418"/>
    </location>
</feature>
<feature type="domain" description="S4 RNA-binding" evidence="1">
    <location>
        <begin position="352"/>
        <end position="418"/>
    </location>
</feature>
<feature type="short sequence motif" description="'HIGH' region">
    <location>
        <begin position="39"/>
        <end position="48"/>
    </location>
</feature>
<feature type="short sequence motif" description="'KMSKS' region">
    <location>
        <begin position="229"/>
        <end position="233"/>
    </location>
</feature>
<feature type="binding site" evidence="1">
    <location>
        <position position="34"/>
    </location>
    <ligand>
        <name>L-tyrosine</name>
        <dbReference type="ChEBI" id="CHEBI:58315"/>
    </ligand>
</feature>
<feature type="binding site" evidence="1">
    <location>
        <position position="169"/>
    </location>
    <ligand>
        <name>L-tyrosine</name>
        <dbReference type="ChEBI" id="CHEBI:58315"/>
    </ligand>
</feature>
<feature type="binding site" evidence="1">
    <location>
        <position position="173"/>
    </location>
    <ligand>
        <name>L-tyrosine</name>
        <dbReference type="ChEBI" id="CHEBI:58315"/>
    </ligand>
</feature>
<feature type="binding site" evidence="1">
    <location>
        <position position="232"/>
    </location>
    <ligand>
        <name>ATP</name>
        <dbReference type="ChEBI" id="CHEBI:30616"/>
    </ligand>
</feature>